<dbReference type="EMBL" id="AK008741">
    <property type="protein sequence ID" value="BAB25870.1"/>
    <property type="molecule type" value="mRNA"/>
</dbReference>
<dbReference type="EMBL" id="AK017592">
    <property type="protein sequence ID" value="BAB30826.1"/>
    <property type="molecule type" value="mRNA"/>
</dbReference>
<dbReference type="EMBL" id="AK032314">
    <property type="protein sequence ID" value="BAC27807.1"/>
    <property type="molecule type" value="mRNA"/>
</dbReference>
<dbReference type="EMBL" id="AK032624">
    <property type="protein sequence ID" value="BAC27956.1"/>
    <property type="molecule type" value="mRNA"/>
</dbReference>
<dbReference type="EMBL" id="BC028748">
    <property type="protein sequence ID" value="AAH28748.1"/>
    <property type="molecule type" value="mRNA"/>
</dbReference>
<dbReference type="CCDS" id="CCDS27282.1"/>
<dbReference type="RefSeq" id="NP_080490.3">
    <property type="nucleotide sequence ID" value="NM_026214.3"/>
</dbReference>
<dbReference type="SMR" id="Q9D7X1"/>
<dbReference type="FunCoup" id="Q9D7X1">
    <property type="interactions" value="8"/>
</dbReference>
<dbReference type="STRING" id="10090.ENSMUSP00000061734"/>
<dbReference type="iPTMnet" id="Q9D7X1"/>
<dbReference type="PhosphoSitePlus" id="Q9D7X1"/>
<dbReference type="PaxDb" id="10090-ENSMUSP00000061734"/>
<dbReference type="ProteomicsDB" id="263421"/>
<dbReference type="Antibodypedia" id="23595">
    <property type="antibodies" value="162 antibodies from 21 providers"/>
</dbReference>
<dbReference type="DNASU" id="67516"/>
<dbReference type="Ensembl" id="ENSMUST00000050120.4">
    <property type="protein sequence ID" value="ENSMUSP00000061734.3"/>
    <property type="gene ID" value="ENSMUSG00000046523.6"/>
</dbReference>
<dbReference type="GeneID" id="67516"/>
<dbReference type="KEGG" id="mmu:67516"/>
<dbReference type="UCSC" id="uc007urc.1">
    <property type="organism name" value="mouse"/>
</dbReference>
<dbReference type="AGR" id="MGI:1914766"/>
<dbReference type="CTD" id="386618"/>
<dbReference type="MGI" id="MGI:1914766">
    <property type="gene designation" value="Kctd4"/>
</dbReference>
<dbReference type="VEuPathDB" id="HostDB:ENSMUSG00000046523"/>
<dbReference type="eggNOG" id="KOG2723">
    <property type="taxonomic scope" value="Eukaryota"/>
</dbReference>
<dbReference type="GeneTree" id="ENSGT00940000159552"/>
<dbReference type="HOGENOM" id="CLU_1081647_0_0_1"/>
<dbReference type="InParanoid" id="Q9D7X1"/>
<dbReference type="OMA" id="GKKPVQH"/>
<dbReference type="OrthoDB" id="2414723at2759"/>
<dbReference type="PhylomeDB" id="Q9D7X1"/>
<dbReference type="TreeFam" id="TF315332"/>
<dbReference type="BioGRID-ORCS" id="67516">
    <property type="hits" value="3 hits in 76 CRISPR screens"/>
</dbReference>
<dbReference type="PRO" id="PR:Q9D7X1"/>
<dbReference type="Proteomes" id="UP000000589">
    <property type="component" value="Chromosome 14"/>
</dbReference>
<dbReference type="RNAct" id="Q9D7X1">
    <property type="molecule type" value="protein"/>
</dbReference>
<dbReference type="Bgee" id="ENSMUSG00000046523">
    <property type="expression patterns" value="Expressed in dentate gyrus of hippocampal formation and 101 other cell types or tissues"/>
</dbReference>
<dbReference type="GO" id="GO:0051260">
    <property type="term" value="P:protein homooligomerization"/>
    <property type="evidence" value="ECO:0007669"/>
    <property type="project" value="InterPro"/>
</dbReference>
<dbReference type="CDD" id="cd18364">
    <property type="entry name" value="BTB_POZ_KCTD4"/>
    <property type="match status" value="1"/>
</dbReference>
<dbReference type="Gene3D" id="3.30.710.10">
    <property type="entry name" value="Potassium Channel Kv1.1, Chain A"/>
    <property type="match status" value="1"/>
</dbReference>
<dbReference type="InterPro" id="IPR000210">
    <property type="entry name" value="BTB/POZ_dom"/>
</dbReference>
<dbReference type="InterPro" id="IPR045740">
    <property type="entry name" value="KCTD4_C"/>
</dbReference>
<dbReference type="InterPro" id="IPR011333">
    <property type="entry name" value="SKP1/BTB/POZ_sf"/>
</dbReference>
<dbReference type="InterPro" id="IPR003131">
    <property type="entry name" value="T1-type_BTB"/>
</dbReference>
<dbReference type="PANTHER" id="PTHR14499:SF9">
    <property type="entry name" value="BTB_POZ DOMAIN-CONTAINING PROTEIN KCTD4"/>
    <property type="match status" value="1"/>
</dbReference>
<dbReference type="PANTHER" id="PTHR14499">
    <property type="entry name" value="POTASSIUM CHANNEL TETRAMERIZATION DOMAIN-CONTAINING"/>
    <property type="match status" value="1"/>
</dbReference>
<dbReference type="Pfam" id="PF02214">
    <property type="entry name" value="BTB_2"/>
    <property type="match status" value="1"/>
</dbReference>
<dbReference type="Pfam" id="PF19323">
    <property type="entry name" value="KCTD4_C"/>
    <property type="match status" value="1"/>
</dbReference>
<dbReference type="SMART" id="SM00225">
    <property type="entry name" value="BTB"/>
    <property type="match status" value="1"/>
</dbReference>
<dbReference type="SUPFAM" id="SSF54695">
    <property type="entry name" value="POZ domain"/>
    <property type="match status" value="1"/>
</dbReference>
<keyword id="KW-1185">Reference proteome</keyword>
<evidence type="ECO:0000305" key="1"/>
<feature type="chain" id="PRO_0000191290" description="BTB/POZ domain-containing protein KCTD4">
    <location>
        <begin position="1"/>
        <end position="259"/>
    </location>
</feature>
<feature type="domain" description="BTB">
    <location>
        <begin position="33"/>
        <end position="134"/>
    </location>
</feature>
<feature type="sequence conflict" description="In Ref. 1; BAC27807." evidence="1" ref="1">
    <original>E</original>
    <variation>D</variation>
    <location>
        <position position="60"/>
    </location>
</feature>
<feature type="sequence conflict" description="In Ref. 1; BAB30826." evidence="1" ref="1">
    <original>G</original>
    <variation>R</variation>
    <location>
        <position position="103"/>
    </location>
</feature>
<reference key="1">
    <citation type="journal article" date="2005" name="Science">
        <title>The transcriptional landscape of the mammalian genome.</title>
        <authorList>
            <person name="Carninci P."/>
            <person name="Kasukawa T."/>
            <person name="Katayama S."/>
            <person name="Gough J."/>
            <person name="Frith M.C."/>
            <person name="Maeda N."/>
            <person name="Oyama R."/>
            <person name="Ravasi T."/>
            <person name="Lenhard B."/>
            <person name="Wells C."/>
            <person name="Kodzius R."/>
            <person name="Shimokawa K."/>
            <person name="Bajic V.B."/>
            <person name="Brenner S.E."/>
            <person name="Batalov S."/>
            <person name="Forrest A.R."/>
            <person name="Zavolan M."/>
            <person name="Davis M.J."/>
            <person name="Wilming L.G."/>
            <person name="Aidinis V."/>
            <person name="Allen J.E."/>
            <person name="Ambesi-Impiombato A."/>
            <person name="Apweiler R."/>
            <person name="Aturaliya R.N."/>
            <person name="Bailey T.L."/>
            <person name="Bansal M."/>
            <person name="Baxter L."/>
            <person name="Beisel K.W."/>
            <person name="Bersano T."/>
            <person name="Bono H."/>
            <person name="Chalk A.M."/>
            <person name="Chiu K.P."/>
            <person name="Choudhary V."/>
            <person name="Christoffels A."/>
            <person name="Clutterbuck D.R."/>
            <person name="Crowe M.L."/>
            <person name="Dalla E."/>
            <person name="Dalrymple B.P."/>
            <person name="de Bono B."/>
            <person name="Della Gatta G."/>
            <person name="di Bernardo D."/>
            <person name="Down T."/>
            <person name="Engstrom P."/>
            <person name="Fagiolini M."/>
            <person name="Faulkner G."/>
            <person name="Fletcher C.F."/>
            <person name="Fukushima T."/>
            <person name="Furuno M."/>
            <person name="Futaki S."/>
            <person name="Gariboldi M."/>
            <person name="Georgii-Hemming P."/>
            <person name="Gingeras T.R."/>
            <person name="Gojobori T."/>
            <person name="Green R.E."/>
            <person name="Gustincich S."/>
            <person name="Harbers M."/>
            <person name="Hayashi Y."/>
            <person name="Hensch T.K."/>
            <person name="Hirokawa N."/>
            <person name="Hill D."/>
            <person name="Huminiecki L."/>
            <person name="Iacono M."/>
            <person name="Ikeo K."/>
            <person name="Iwama A."/>
            <person name="Ishikawa T."/>
            <person name="Jakt M."/>
            <person name="Kanapin A."/>
            <person name="Katoh M."/>
            <person name="Kawasawa Y."/>
            <person name="Kelso J."/>
            <person name="Kitamura H."/>
            <person name="Kitano H."/>
            <person name="Kollias G."/>
            <person name="Krishnan S.P."/>
            <person name="Kruger A."/>
            <person name="Kummerfeld S.K."/>
            <person name="Kurochkin I.V."/>
            <person name="Lareau L.F."/>
            <person name="Lazarevic D."/>
            <person name="Lipovich L."/>
            <person name="Liu J."/>
            <person name="Liuni S."/>
            <person name="McWilliam S."/>
            <person name="Madan Babu M."/>
            <person name="Madera M."/>
            <person name="Marchionni L."/>
            <person name="Matsuda H."/>
            <person name="Matsuzawa S."/>
            <person name="Miki H."/>
            <person name="Mignone F."/>
            <person name="Miyake S."/>
            <person name="Morris K."/>
            <person name="Mottagui-Tabar S."/>
            <person name="Mulder N."/>
            <person name="Nakano N."/>
            <person name="Nakauchi H."/>
            <person name="Ng P."/>
            <person name="Nilsson R."/>
            <person name="Nishiguchi S."/>
            <person name="Nishikawa S."/>
            <person name="Nori F."/>
            <person name="Ohara O."/>
            <person name="Okazaki Y."/>
            <person name="Orlando V."/>
            <person name="Pang K.C."/>
            <person name="Pavan W.J."/>
            <person name="Pavesi G."/>
            <person name="Pesole G."/>
            <person name="Petrovsky N."/>
            <person name="Piazza S."/>
            <person name="Reed J."/>
            <person name="Reid J.F."/>
            <person name="Ring B.Z."/>
            <person name="Ringwald M."/>
            <person name="Rost B."/>
            <person name="Ruan Y."/>
            <person name="Salzberg S.L."/>
            <person name="Sandelin A."/>
            <person name="Schneider C."/>
            <person name="Schoenbach C."/>
            <person name="Sekiguchi K."/>
            <person name="Semple C.A."/>
            <person name="Seno S."/>
            <person name="Sessa L."/>
            <person name="Sheng Y."/>
            <person name="Shibata Y."/>
            <person name="Shimada H."/>
            <person name="Shimada K."/>
            <person name="Silva D."/>
            <person name="Sinclair B."/>
            <person name="Sperling S."/>
            <person name="Stupka E."/>
            <person name="Sugiura K."/>
            <person name="Sultana R."/>
            <person name="Takenaka Y."/>
            <person name="Taki K."/>
            <person name="Tammoja K."/>
            <person name="Tan S.L."/>
            <person name="Tang S."/>
            <person name="Taylor M.S."/>
            <person name="Tegner J."/>
            <person name="Teichmann S.A."/>
            <person name="Ueda H.R."/>
            <person name="van Nimwegen E."/>
            <person name="Verardo R."/>
            <person name="Wei C.L."/>
            <person name="Yagi K."/>
            <person name="Yamanishi H."/>
            <person name="Zabarovsky E."/>
            <person name="Zhu S."/>
            <person name="Zimmer A."/>
            <person name="Hide W."/>
            <person name="Bult C."/>
            <person name="Grimmond S.M."/>
            <person name="Teasdale R.D."/>
            <person name="Liu E.T."/>
            <person name="Brusic V."/>
            <person name="Quackenbush J."/>
            <person name="Wahlestedt C."/>
            <person name="Mattick J.S."/>
            <person name="Hume D.A."/>
            <person name="Kai C."/>
            <person name="Sasaki D."/>
            <person name="Tomaru Y."/>
            <person name="Fukuda S."/>
            <person name="Kanamori-Katayama M."/>
            <person name="Suzuki M."/>
            <person name="Aoki J."/>
            <person name="Arakawa T."/>
            <person name="Iida J."/>
            <person name="Imamura K."/>
            <person name="Itoh M."/>
            <person name="Kato T."/>
            <person name="Kawaji H."/>
            <person name="Kawagashira N."/>
            <person name="Kawashima T."/>
            <person name="Kojima M."/>
            <person name="Kondo S."/>
            <person name="Konno H."/>
            <person name="Nakano K."/>
            <person name="Ninomiya N."/>
            <person name="Nishio T."/>
            <person name="Okada M."/>
            <person name="Plessy C."/>
            <person name="Shibata K."/>
            <person name="Shiraki T."/>
            <person name="Suzuki S."/>
            <person name="Tagami M."/>
            <person name="Waki K."/>
            <person name="Watahiki A."/>
            <person name="Okamura-Oho Y."/>
            <person name="Suzuki H."/>
            <person name="Kawai J."/>
            <person name="Hayashizaki Y."/>
        </authorList>
    </citation>
    <scope>NUCLEOTIDE SEQUENCE [LARGE SCALE MRNA]</scope>
    <source>
        <strain>C57BL/6J</strain>
        <tissue>Olfactory bulb</tissue>
        <tissue>Stomach</tissue>
    </source>
</reference>
<reference key="2">
    <citation type="journal article" date="2004" name="Genome Res.">
        <title>The status, quality, and expansion of the NIH full-length cDNA project: the Mammalian Gene Collection (MGC).</title>
        <authorList>
            <consortium name="The MGC Project Team"/>
        </authorList>
    </citation>
    <scope>NUCLEOTIDE SEQUENCE [LARGE SCALE MRNA]</scope>
    <source>
        <strain>C57BL/6J</strain>
        <tissue>Mammary gland</tissue>
    </source>
</reference>
<reference key="3">
    <citation type="journal article" date="2010" name="Cell">
        <title>A tissue-specific atlas of mouse protein phosphorylation and expression.</title>
        <authorList>
            <person name="Huttlin E.L."/>
            <person name="Jedrychowski M.P."/>
            <person name="Elias J.E."/>
            <person name="Goswami T."/>
            <person name="Rad R."/>
            <person name="Beausoleil S.A."/>
            <person name="Villen J."/>
            <person name="Haas W."/>
            <person name="Sowa M.E."/>
            <person name="Gygi S.P."/>
        </authorList>
    </citation>
    <scope>IDENTIFICATION BY MASS SPECTROMETRY [LARGE SCALE ANALYSIS]</scope>
    <source>
        <tissue>Brain</tissue>
    </source>
</reference>
<protein>
    <recommendedName>
        <fullName>BTB/POZ domain-containing protein KCTD4</fullName>
    </recommendedName>
</protein>
<accession>Q9D7X1</accession>
<accession>Q8CCQ3</accession>
<accession>Q9CYK4</accession>
<proteinExistence type="evidence at protein level"/>
<name>KCTD4_MOUSE</name>
<gene>
    <name type="primary">Kctd4</name>
</gene>
<sequence>MERKIIRREKEREYEGRHNSVEDAEQGKNCKSTLMTLNVGGYLYITQKQTLTKYPDTFLEGIVNGKILCPFDADGHYFIDRDGLLFRHVLNFLRNGELLLPEGFRENQLLAQEAEFFQLKGLAEEVKSRWEKEQLTPRETTFLEITDNHDRSQGLRIFCNAPDFISKIKSRIVLVSKSRLDGFPEEFSVSSNIIQFKYFIKSENGTRLVLKEDNTFVCTLETLKFEAIMMALKCGFRLLTSLDCSKGSIVHSDALHFIK</sequence>
<organism>
    <name type="scientific">Mus musculus</name>
    <name type="common">Mouse</name>
    <dbReference type="NCBI Taxonomy" id="10090"/>
    <lineage>
        <taxon>Eukaryota</taxon>
        <taxon>Metazoa</taxon>
        <taxon>Chordata</taxon>
        <taxon>Craniata</taxon>
        <taxon>Vertebrata</taxon>
        <taxon>Euteleostomi</taxon>
        <taxon>Mammalia</taxon>
        <taxon>Eutheria</taxon>
        <taxon>Euarchontoglires</taxon>
        <taxon>Glires</taxon>
        <taxon>Rodentia</taxon>
        <taxon>Myomorpha</taxon>
        <taxon>Muroidea</taxon>
        <taxon>Muridae</taxon>
        <taxon>Murinae</taxon>
        <taxon>Mus</taxon>
        <taxon>Mus</taxon>
    </lineage>
</organism>